<name>GIN1_HUMAN</name>
<protein>
    <recommendedName>
        <fullName>Gypsy retrotransposon integrase-like protein 1</fullName>
        <shortName>GIN-1</shortName>
    </recommendedName>
    <alternativeName>
        <fullName>Ty3/Gypsy integrase 1</fullName>
    </alternativeName>
    <alternativeName>
        <fullName>Zinc finger H2C2 domain-containing protein</fullName>
    </alternativeName>
</protein>
<proteinExistence type="evidence at protein level"/>
<dbReference type="EMBL" id="AK000132">
    <property type="protein sequence ID" value="BAA90963.1"/>
    <property type="status" value="ALT_FRAME"/>
    <property type="molecule type" value="mRNA"/>
</dbReference>
<dbReference type="EMBL" id="AK295796">
    <property type="protein sequence ID" value="BAG58616.1"/>
    <property type="molecule type" value="mRNA"/>
</dbReference>
<dbReference type="EMBL" id="CR627424">
    <property type="protein sequence ID" value="CAH10511.1"/>
    <property type="status" value="ALT_SEQ"/>
    <property type="molecule type" value="mRNA"/>
</dbReference>
<dbReference type="EMBL" id="AC008447">
    <property type="status" value="NOT_ANNOTATED_CDS"/>
    <property type="molecule type" value="Genomic_DNA"/>
</dbReference>
<dbReference type="EMBL" id="CH471086">
    <property type="protein sequence ID" value="EAW49080.1"/>
    <property type="molecule type" value="Genomic_DNA"/>
</dbReference>
<dbReference type="EMBL" id="BC015325">
    <property type="protein sequence ID" value="AAH15325.1"/>
    <property type="molecule type" value="mRNA"/>
</dbReference>
<dbReference type="EMBL" id="BC151135">
    <property type="protein sequence ID" value="AAI51136.1"/>
    <property type="molecule type" value="mRNA"/>
</dbReference>
<dbReference type="EMBL" id="BC157835">
    <property type="protein sequence ID" value="AAI57836.1"/>
    <property type="molecule type" value="mRNA"/>
</dbReference>
<dbReference type="CCDS" id="CCDS43349.1">
    <molecule id="Q9NXP7-1"/>
</dbReference>
<dbReference type="RefSeq" id="NP_001304883.1">
    <property type="nucleotide sequence ID" value="NM_001317954.1"/>
</dbReference>
<dbReference type="RefSeq" id="NP_060146.2">
    <molecule id="Q9NXP7-1"/>
    <property type="nucleotide sequence ID" value="NM_017676.2"/>
</dbReference>
<dbReference type="RefSeq" id="XP_016865088.1">
    <molecule id="Q9NXP7-1"/>
    <property type="nucleotide sequence ID" value="XM_017009599.2"/>
</dbReference>
<dbReference type="SMR" id="Q9NXP7"/>
<dbReference type="BioGRID" id="120180">
    <property type="interactions" value="12"/>
</dbReference>
<dbReference type="FunCoup" id="Q9NXP7">
    <property type="interactions" value="1005"/>
</dbReference>
<dbReference type="IntAct" id="Q9NXP7">
    <property type="interactions" value="3"/>
</dbReference>
<dbReference type="STRING" id="9606.ENSP00000381970"/>
<dbReference type="iPTMnet" id="Q9NXP7"/>
<dbReference type="PhosphoSitePlus" id="Q9NXP7"/>
<dbReference type="BioMuta" id="GIN1"/>
<dbReference type="DMDM" id="296439336"/>
<dbReference type="jPOST" id="Q9NXP7"/>
<dbReference type="MassIVE" id="Q9NXP7"/>
<dbReference type="PaxDb" id="9606-ENSP00000381970"/>
<dbReference type="PeptideAtlas" id="Q9NXP7"/>
<dbReference type="ProteomicsDB" id="83117">
    <molecule id="Q9NXP7-1"/>
</dbReference>
<dbReference type="ProteomicsDB" id="83118">
    <molecule id="Q9NXP7-2"/>
</dbReference>
<dbReference type="ProteomicsDB" id="83119">
    <molecule id="Q9NXP7-3"/>
</dbReference>
<dbReference type="Antibodypedia" id="48162">
    <property type="antibodies" value="55 antibodies from 13 providers"/>
</dbReference>
<dbReference type="DNASU" id="54826"/>
<dbReference type="Ensembl" id="ENST00000399004.7">
    <molecule id="Q9NXP7-1"/>
    <property type="protein sequence ID" value="ENSP00000381970.2"/>
    <property type="gene ID" value="ENSG00000145723.17"/>
</dbReference>
<dbReference type="Ensembl" id="ENST00000508629.5">
    <molecule id="Q9NXP7-3"/>
    <property type="protein sequence ID" value="ENSP00000427162.1"/>
    <property type="gene ID" value="ENSG00000145723.17"/>
</dbReference>
<dbReference type="Ensembl" id="ENST00000512248.5">
    <molecule id="Q9NXP7-2"/>
    <property type="protein sequence ID" value="ENSP00000422960.1"/>
    <property type="gene ID" value="ENSG00000145723.17"/>
</dbReference>
<dbReference type="Ensembl" id="ENST00000513747.1">
    <molecule id="Q9NXP7-2"/>
    <property type="protein sequence ID" value="ENSP00000423031.1"/>
    <property type="gene ID" value="ENSG00000145723.17"/>
</dbReference>
<dbReference type="GeneID" id="54826"/>
<dbReference type="KEGG" id="hsa:54826"/>
<dbReference type="MANE-Select" id="ENST00000399004.7">
    <property type="protein sequence ID" value="ENSP00000381970.2"/>
    <property type="RefSeq nucleotide sequence ID" value="NM_017676.2"/>
    <property type="RefSeq protein sequence ID" value="NP_060146.2"/>
</dbReference>
<dbReference type="UCSC" id="uc003koa.2">
    <molecule id="Q9NXP7-1"/>
    <property type="organism name" value="human"/>
</dbReference>
<dbReference type="AGR" id="HGNC:25959"/>
<dbReference type="CTD" id="54826"/>
<dbReference type="DisGeNET" id="54826"/>
<dbReference type="GeneCards" id="GIN1"/>
<dbReference type="HGNC" id="HGNC:25959">
    <property type="gene designation" value="GIN1"/>
</dbReference>
<dbReference type="HPA" id="ENSG00000145723">
    <property type="expression patterns" value="Low tissue specificity"/>
</dbReference>
<dbReference type="neXtProt" id="NX_Q9NXP7"/>
<dbReference type="OpenTargets" id="ENSG00000145723"/>
<dbReference type="PharmGKB" id="PA162389674"/>
<dbReference type="VEuPathDB" id="HostDB:ENSG00000145723"/>
<dbReference type="eggNOG" id="KOG0017">
    <property type="taxonomic scope" value="Eukaryota"/>
</dbReference>
<dbReference type="GeneTree" id="ENSGT00940000160670"/>
<dbReference type="HOGENOM" id="CLU_2589081_0_0_1"/>
<dbReference type="InParanoid" id="Q9NXP7"/>
<dbReference type="OMA" id="YPNNWDD"/>
<dbReference type="OrthoDB" id="413122at2759"/>
<dbReference type="PAN-GO" id="Q9NXP7">
    <property type="GO annotations" value="0 GO annotations based on evolutionary models"/>
</dbReference>
<dbReference type="PhylomeDB" id="Q9NXP7"/>
<dbReference type="TreeFam" id="TF352301"/>
<dbReference type="PathwayCommons" id="Q9NXP7"/>
<dbReference type="SignaLink" id="Q9NXP7"/>
<dbReference type="BioGRID-ORCS" id="54826">
    <property type="hits" value="8 hits in 1148 CRISPR screens"/>
</dbReference>
<dbReference type="ChiTaRS" id="GIN1">
    <property type="organism name" value="human"/>
</dbReference>
<dbReference type="GenomeRNAi" id="54826"/>
<dbReference type="Pharos" id="Q9NXP7">
    <property type="development level" value="Tbio"/>
</dbReference>
<dbReference type="PRO" id="PR:Q9NXP7"/>
<dbReference type="Proteomes" id="UP000005640">
    <property type="component" value="Chromosome 5"/>
</dbReference>
<dbReference type="RNAct" id="Q9NXP7">
    <property type="molecule type" value="protein"/>
</dbReference>
<dbReference type="Bgee" id="ENSG00000145723">
    <property type="expression patterns" value="Expressed in primordial germ cell in gonad and 178 other cell types or tissues"/>
</dbReference>
<dbReference type="GO" id="GO:0003676">
    <property type="term" value="F:nucleic acid binding"/>
    <property type="evidence" value="ECO:0007669"/>
    <property type="project" value="InterPro"/>
</dbReference>
<dbReference type="GO" id="GO:0015074">
    <property type="term" value="P:DNA integration"/>
    <property type="evidence" value="ECO:0007669"/>
    <property type="project" value="InterPro"/>
</dbReference>
<dbReference type="FunFam" id="1.10.340.70:FF:000001">
    <property type="entry name" value="Retrovirus-related Pol polyprotein from transposon gypsy-like Protein"/>
    <property type="match status" value="1"/>
</dbReference>
<dbReference type="Gene3D" id="1.10.340.70">
    <property type="match status" value="1"/>
</dbReference>
<dbReference type="Gene3D" id="3.30.420.10">
    <property type="entry name" value="Ribonuclease H-like superfamily/Ribonuclease H"/>
    <property type="match status" value="1"/>
</dbReference>
<dbReference type="InterPro" id="IPR001584">
    <property type="entry name" value="Integrase_cat-core"/>
</dbReference>
<dbReference type="InterPro" id="IPR041588">
    <property type="entry name" value="Integrase_H2C2"/>
</dbReference>
<dbReference type="InterPro" id="IPR050951">
    <property type="entry name" value="Retrovirus_Pol_polyprotein"/>
</dbReference>
<dbReference type="InterPro" id="IPR012337">
    <property type="entry name" value="RNaseH-like_sf"/>
</dbReference>
<dbReference type="InterPro" id="IPR036397">
    <property type="entry name" value="RNaseH_sf"/>
</dbReference>
<dbReference type="PANTHER" id="PTHR37984">
    <property type="entry name" value="PROTEIN CBG26694"/>
    <property type="match status" value="1"/>
</dbReference>
<dbReference type="PANTHER" id="PTHR37984:SF5">
    <property type="entry name" value="PROTEIN NYNRIN-LIKE"/>
    <property type="match status" value="1"/>
</dbReference>
<dbReference type="Pfam" id="PF17921">
    <property type="entry name" value="Integrase_H2C2"/>
    <property type="match status" value="1"/>
</dbReference>
<dbReference type="Pfam" id="PF00665">
    <property type="entry name" value="rve"/>
    <property type="match status" value="1"/>
</dbReference>
<dbReference type="SUPFAM" id="SSF53098">
    <property type="entry name" value="Ribonuclease H-like"/>
    <property type="match status" value="1"/>
</dbReference>
<dbReference type="PROSITE" id="PS50994">
    <property type="entry name" value="INTEGRASE"/>
    <property type="match status" value="1"/>
</dbReference>
<evidence type="ECO:0000255" key="1">
    <source>
        <dbReference type="PROSITE-ProRule" id="PRU00457"/>
    </source>
</evidence>
<evidence type="ECO:0000269" key="2">
    <source>
    </source>
</evidence>
<evidence type="ECO:0000269" key="3">
    <source>
    </source>
</evidence>
<evidence type="ECO:0000269" key="4">
    <source>
    </source>
</evidence>
<evidence type="ECO:0000303" key="5">
    <source>
    </source>
</evidence>
<evidence type="ECO:0000303" key="6">
    <source>
    </source>
</evidence>
<evidence type="ECO:0000305" key="7"/>
<evidence type="ECO:0007744" key="8">
    <source>
    </source>
</evidence>
<accession>Q9NXP7</accession>
<accession>B2RXF7</accession>
<accession>B4DIV4</accession>
<accession>Q6AI03</accession>
<accession>Q96BR2</accession>
<sequence length="522" mass="59842">MVRSGKNGDLHLKQIAYYKRTGEYHSTTLPSERSGIRRAAKKFVFKEKKLFYVGKDRKQNRLVIVSEEEKKKVLRECHENDSGAHHGISRTLTLVESNYYWTSVTNDVKQWVYACQHCQVAKNTVIVAPKQHLLKVENPWSLVTVDLMGPFHTSNRSHVYAIIMTDLFTKWIVILPLCDVSASEVSKAIINIFFLYGPPQKIIMDQRDEFIQQINIELYRLFGIKQIVISHTSGTVNPTESTPNTIKAFLSKHCADHPNNWDDHLSAVSFAFNVTHLEPTKNTPYFQMFSRNPYMPETSDSLHEVDGDNTSMFAKILDAIKEADKIMENKTTSLGQMENNNLDELNKSKIIVKKKPKQLNPFHLKVGHEVLRQRKNWWKDGRFQSEWVGPCVIDYITESGCAVLRDNTGVRLKRPIKMSHLKPYIRESSEQESLYLLQGSVVADHDYIGLPEIPIGAYQANILVEDATIGIVDNELLTSSKDRELLEYRNTKISPLIDDHSSLEKQTFSLLDSSNQVLEYLS</sequence>
<feature type="chain" id="PRO_0000333016" description="Gypsy retrotransposon integrase-like protein 1">
    <location>
        <begin position="1"/>
        <end position="522"/>
    </location>
</feature>
<feature type="domain" description="Integrase catalytic" evidence="1">
    <location>
        <begin position="135"/>
        <end position="292"/>
    </location>
</feature>
<feature type="modified residue" description="Phosphoserine" evidence="8">
    <location>
        <position position="502"/>
    </location>
</feature>
<feature type="splice variant" id="VSP_038518" description="In isoform 2." evidence="6">
    <original>EKKLFYVGKDRKQNRLVIVSEEEKKKVLRECHEN</original>
    <variation>GICLSALPSGKKYSYCSTETAPSQGGKSMEFSYC</variation>
    <location>
        <begin position="47"/>
        <end position="80"/>
    </location>
</feature>
<feature type="splice variant" id="VSP_038519" description="In isoform 2." evidence="6">
    <location>
        <begin position="81"/>
        <end position="522"/>
    </location>
</feature>
<feature type="splice variant" id="VSP_033438" description="In isoform 3." evidence="5">
    <original>INIELYRLF</original>
    <variation>KVFISCKVQ</variation>
    <location>
        <begin position="214"/>
        <end position="222"/>
    </location>
</feature>
<feature type="splice variant" id="VSP_033439" description="In isoform 3." evidence="5">
    <location>
        <begin position="223"/>
        <end position="522"/>
    </location>
</feature>
<feature type="sequence variant" id="VAR_043041" description="In dbSNP:rs17851289." evidence="4">
    <original>G</original>
    <variation>C</variation>
    <location>
        <position position="22"/>
    </location>
</feature>
<feature type="sequence variant" id="VAR_043042" description="In dbSNP:rs34813." evidence="3 4">
    <original>T</original>
    <variation>M</variation>
    <location>
        <position position="239"/>
    </location>
</feature>
<feature type="sequence conflict" description="In Ref. 1; BAA90963." evidence="7" ref="1">
    <original>V</original>
    <variation>A</variation>
    <location>
        <position position="108"/>
    </location>
</feature>
<feature type="sequence conflict" description="In Ref. 2; CAH10511." evidence="7" ref="2">
    <original>F</original>
    <variation>L</variation>
    <location>
        <position position="313"/>
    </location>
</feature>
<comment type="alternative products">
    <event type="alternative splicing"/>
    <isoform>
        <id>Q9NXP7-1</id>
        <name>1</name>
        <sequence type="displayed"/>
    </isoform>
    <isoform>
        <id>Q9NXP7-2</id>
        <name>2</name>
        <sequence type="described" ref="VSP_038518 VSP_038519"/>
    </isoform>
    <isoform>
        <id>Q9NXP7-3</id>
        <name>3</name>
        <sequence type="described" ref="VSP_033438 VSP_033439"/>
    </isoform>
</comment>
<comment type="tissue specificity">
    <text evidence="2">Widely expressed. Also found in tumors originating from parathyroid gland, colon, stomach, bladder, uterus and prostate.</text>
</comment>
<comment type="miscellaneous">
    <molecule>Isoform 2</molecule>
    <text evidence="7">May be produced at very low levels due to a premature stop codon in the mRNA, leading to nonsense-mediated mRNA decay.</text>
</comment>
<comment type="sequence caution" evidence="7">
    <conflict type="frameshift">
        <sequence resource="EMBL-CDS" id="BAA90963"/>
    </conflict>
</comment>
<comment type="sequence caution" evidence="7">
    <conflict type="miscellaneous discrepancy">
        <sequence resource="EMBL-CDS" id="CAH10511"/>
    </conflict>
    <text>Wrong choice of CDS.</text>
</comment>
<keyword id="KW-0025">Alternative splicing</keyword>
<keyword id="KW-0597">Phosphoprotein</keyword>
<keyword id="KW-1267">Proteomics identification</keyword>
<keyword id="KW-1185">Reference proteome</keyword>
<organism>
    <name type="scientific">Homo sapiens</name>
    <name type="common">Human</name>
    <dbReference type="NCBI Taxonomy" id="9606"/>
    <lineage>
        <taxon>Eukaryota</taxon>
        <taxon>Metazoa</taxon>
        <taxon>Chordata</taxon>
        <taxon>Craniata</taxon>
        <taxon>Vertebrata</taxon>
        <taxon>Euteleostomi</taxon>
        <taxon>Mammalia</taxon>
        <taxon>Eutheria</taxon>
        <taxon>Euarchontoglires</taxon>
        <taxon>Primates</taxon>
        <taxon>Haplorrhini</taxon>
        <taxon>Catarrhini</taxon>
        <taxon>Hominidae</taxon>
        <taxon>Homo</taxon>
    </lineage>
</organism>
<reference key="1">
    <citation type="journal article" date="2004" name="Nat. Genet.">
        <title>Complete sequencing and characterization of 21,243 full-length human cDNAs.</title>
        <authorList>
            <person name="Ota T."/>
            <person name="Suzuki Y."/>
            <person name="Nishikawa T."/>
            <person name="Otsuki T."/>
            <person name="Sugiyama T."/>
            <person name="Irie R."/>
            <person name="Wakamatsu A."/>
            <person name="Hayashi K."/>
            <person name="Sato H."/>
            <person name="Nagai K."/>
            <person name="Kimura K."/>
            <person name="Makita H."/>
            <person name="Sekine M."/>
            <person name="Obayashi M."/>
            <person name="Nishi T."/>
            <person name="Shibahara T."/>
            <person name="Tanaka T."/>
            <person name="Ishii S."/>
            <person name="Yamamoto J."/>
            <person name="Saito K."/>
            <person name="Kawai Y."/>
            <person name="Isono Y."/>
            <person name="Nakamura Y."/>
            <person name="Nagahari K."/>
            <person name="Murakami K."/>
            <person name="Yasuda T."/>
            <person name="Iwayanagi T."/>
            <person name="Wagatsuma M."/>
            <person name="Shiratori A."/>
            <person name="Sudo H."/>
            <person name="Hosoiri T."/>
            <person name="Kaku Y."/>
            <person name="Kodaira H."/>
            <person name="Kondo H."/>
            <person name="Sugawara M."/>
            <person name="Takahashi M."/>
            <person name="Kanda K."/>
            <person name="Yokoi T."/>
            <person name="Furuya T."/>
            <person name="Kikkawa E."/>
            <person name="Omura Y."/>
            <person name="Abe K."/>
            <person name="Kamihara K."/>
            <person name="Katsuta N."/>
            <person name="Sato K."/>
            <person name="Tanikawa M."/>
            <person name="Yamazaki M."/>
            <person name="Ninomiya K."/>
            <person name="Ishibashi T."/>
            <person name="Yamashita H."/>
            <person name="Murakawa K."/>
            <person name="Fujimori K."/>
            <person name="Tanai H."/>
            <person name="Kimata M."/>
            <person name="Watanabe M."/>
            <person name="Hiraoka S."/>
            <person name="Chiba Y."/>
            <person name="Ishida S."/>
            <person name="Ono Y."/>
            <person name="Takiguchi S."/>
            <person name="Watanabe S."/>
            <person name="Yosida M."/>
            <person name="Hotuta T."/>
            <person name="Kusano J."/>
            <person name="Kanehori K."/>
            <person name="Takahashi-Fujii A."/>
            <person name="Hara H."/>
            <person name="Tanase T.-O."/>
            <person name="Nomura Y."/>
            <person name="Togiya S."/>
            <person name="Komai F."/>
            <person name="Hara R."/>
            <person name="Takeuchi K."/>
            <person name="Arita M."/>
            <person name="Imose N."/>
            <person name="Musashino K."/>
            <person name="Yuuki H."/>
            <person name="Oshima A."/>
            <person name="Sasaki N."/>
            <person name="Aotsuka S."/>
            <person name="Yoshikawa Y."/>
            <person name="Matsunawa H."/>
            <person name="Ichihara T."/>
            <person name="Shiohata N."/>
            <person name="Sano S."/>
            <person name="Moriya S."/>
            <person name="Momiyama H."/>
            <person name="Satoh N."/>
            <person name="Takami S."/>
            <person name="Terashima Y."/>
            <person name="Suzuki O."/>
            <person name="Nakagawa S."/>
            <person name="Senoh A."/>
            <person name="Mizoguchi H."/>
            <person name="Goto Y."/>
            <person name="Shimizu F."/>
            <person name="Wakebe H."/>
            <person name="Hishigaki H."/>
            <person name="Watanabe T."/>
            <person name="Sugiyama A."/>
            <person name="Takemoto M."/>
            <person name="Kawakami B."/>
            <person name="Yamazaki M."/>
            <person name="Watanabe K."/>
            <person name="Kumagai A."/>
            <person name="Itakura S."/>
            <person name="Fukuzumi Y."/>
            <person name="Fujimori Y."/>
            <person name="Komiyama M."/>
            <person name="Tashiro H."/>
            <person name="Tanigami A."/>
            <person name="Fujiwara T."/>
            <person name="Ono T."/>
            <person name="Yamada K."/>
            <person name="Fujii Y."/>
            <person name="Ozaki K."/>
            <person name="Hirao M."/>
            <person name="Ohmori Y."/>
            <person name="Kawabata A."/>
            <person name="Hikiji T."/>
            <person name="Kobatake N."/>
            <person name="Inagaki H."/>
            <person name="Ikema Y."/>
            <person name="Okamoto S."/>
            <person name="Okitani R."/>
            <person name="Kawakami T."/>
            <person name="Noguchi S."/>
            <person name="Itoh T."/>
            <person name="Shigeta K."/>
            <person name="Senba T."/>
            <person name="Matsumura K."/>
            <person name="Nakajima Y."/>
            <person name="Mizuno T."/>
            <person name="Morinaga M."/>
            <person name="Sasaki M."/>
            <person name="Togashi T."/>
            <person name="Oyama M."/>
            <person name="Hata H."/>
            <person name="Watanabe M."/>
            <person name="Komatsu T."/>
            <person name="Mizushima-Sugano J."/>
            <person name="Satoh T."/>
            <person name="Shirai Y."/>
            <person name="Takahashi Y."/>
            <person name="Nakagawa K."/>
            <person name="Okumura K."/>
            <person name="Nagase T."/>
            <person name="Nomura N."/>
            <person name="Kikuchi H."/>
            <person name="Masuho Y."/>
            <person name="Yamashita R."/>
            <person name="Nakai K."/>
            <person name="Yada T."/>
            <person name="Nakamura Y."/>
            <person name="Ohara O."/>
            <person name="Isogai T."/>
            <person name="Sugano S."/>
        </authorList>
    </citation>
    <scope>NUCLEOTIDE SEQUENCE [LARGE SCALE MRNA] (ISOFORM 1)</scope>
    <scope>VARIANT MET-239</scope>
    <source>
        <tissue>Colon</tissue>
        <tissue>Hippocampus</tissue>
    </source>
</reference>
<reference key="2">
    <citation type="journal article" date="2007" name="BMC Genomics">
        <title>The full-ORF clone resource of the German cDNA consortium.</title>
        <authorList>
            <person name="Bechtel S."/>
            <person name="Rosenfelder H."/>
            <person name="Duda A."/>
            <person name="Schmidt C.P."/>
            <person name="Ernst U."/>
            <person name="Wellenreuther R."/>
            <person name="Mehrle A."/>
            <person name="Schuster C."/>
            <person name="Bahr A."/>
            <person name="Bloecker H."/>
            <person name="Heubner D."/>
            <person name="Hoerlein A."/>
            <person name="Michel G."/>
            <person name="Wedler H."/>
            <person name="Koehrer K."/>
            <person name="Ottenwaelder B."/>
            <person name="Poustka A."/>
            <person name="Wiemann S."/>
            <person name="Schupp I."/>
        </authorList>
    </citation>
    <scope>NUCLEOTIDE SEQUENCE [LARGE SCALE MRNA] (ISOFORM 2)</scope>
    <source>
        <tissue>Seminoma</tissue>
    </source>
</reference>
<reference key="3">
    <citation type="journal article" date="2004" name="Nature">
        <title>The DNA sequence and comparative analysis of human chromosome 5.</title>
        <authorList>
            <person name="Schmutz J."/>
            <person name="Martin J."/>
            <person name="Terry A."/>
            <person name="Couronne O."/>
            <person name="Grimwood J."/>
            <person name="Lowry S."/>
            <person name="Gordon L.A."/>
            <person name="Scott D."/>
            <person name="Xie G."/>
            <person name="Huang W."/>
            <person name="Hellsten U."/>
            <person name="Tran-Gyamfi M."/>
            <person name="She X."/>
            <person name="Prabhakar S."/>
            <person name="Aerts A."/>
            <person name="Altherr M."/>
            <person name="Bajorek E."/>
            <person name="Black S."/>
            <person name="Branscomb E."/>
            <person name="Caoile C."/>
            <person name="Challacombe J.F."/>
            <person name="Chan Y.M."/>
            <person name="Denys M."/>
            <person name="Detter J.C."/>
            <person name="Escobar J."/>
            <person name="Flowers D."/>
            <person name="Fotopulos D."/>
            <person name="Glavina T."/>
            <person name="Gomez M."/>
            <person name="Gonzales E."/>
            <person name="Goodstein D."/>
            <person name="Grigoriev I."/>
            <person name="Groza M."/>
            <person name="Hammon N."/>
            <person name="Hawkins T."/>
            <person name="Haydu L."/>
            <person name="Israni S."/>
            <person name="Jett J."/>
            <person name="Kadner K."/>
            <person name="Kimball H."/>
            <person name="Kobayashi A."/>
            <person name="Lopez F."/>
            <person name="Lou Y."/>
            <person name="Martinez D."/>
            <person name="Medina C."/>
            <person name="Morgan J."/>
            <person name="Nandkeshwar R."/>
            <person name="Noonan J.P."/>
            <person name="Pitluck S."/>
            <person name="Pollard M."/>
            <person name="Predki P."/>
            <person name="Priest J."/>
            <person name="Ramirez L."/>
            <person name="Retterer J."/>
            <person name="Rodriguez A."/>
            <person name="Rogers S."/>
            <person name="Salamov A."/>
            <person name="Salazar A."/>
            <person name="Thayer N."/>
            <person name="Tice H."/>
            <person name="Tsai M."/>
            <person name="Ustaszewska A."/>
            <person name="Vo N."/>
            <person name="Wheeler J."/>
            <person name="Wu K."/>
            <person name="Yang J."/>
            <person name="Dickson M."/>
            <person name="Cheng J.-F."/>
            <person name="Eichler E.E."/>
            <person name="Olsen A."/>
            <person name="Pennacchio L.A."/>
            <person name="Rokhsar D.S."/>
            <person name="Richardson P."/>
            <person name="Lucas S.M."/>
            <person name="Myers R.M."/>
            <person name="Rubin E.M."/>
        </authorList>
    </citation>
    <scope>NUCLEOTIDE SEQUENCE [LARGE SCALE GENOMIC DNA]</scope>
</reference>
<reference key="4">
    <citation type="submission" date="2005-09" db="EMBL/GenBank/DDBJ databases">
        <authorList>
            <person name="Mural R.J."/>
            <person name="Istrail S."/>
            <person name="Sutton G.G."/>
            <person name="Florea L."/>
            <person name="Halpern A.L."/>
            <person name="Mobarry C.M."/>
            <person name="Lippert R."/>
            <person name="Walenz B."/>
            <person name="Shatkay H."/>
            <person name="Dew I."/>
            <person name="Miller J.R."/>
            <person name="Flanigan M.J."/>
            <person name="Edwards N.J."/>
            <person name="Bolanos R."/>
            <person name="Fasulo D."/>
            <person name="Halldorsson B.V."/>
            <person name="Hannenhalli S."/>
            <person name="Turner R."/>
            <person name="Yooseph S."/>
            <person name="Lu F."/>
            <person name="Nusskern D.R."/>
            <person name="Shue B.C."/>
            <person name="Zheng X.H."/>
            <person name="Zhong F."/>
            <person name="Delcher A.L."/>
            <person name="Huson D.H."/>
            <person name="Kravitz S.A."/>
            <person name="Mouchard L."/>
            <person name="Reinert K."/>
            <person name="Remington K.A."/>
            <person name="Clark A.G."/>
            <person name="Waterman M.S."/>
            <person name="Eichler E.E."/>
            <person name="Adams M.D."/>
            <person name="Hunkapiller M.W."/>
            <person name="Myers E.W."/>
            <person name="Venter J.C."/>
        </authorList>
    </citation>
    <scope>NUCLEOTIDE SEQUENCE [LARGE SCALE GENOMIC DNA]</scope>
</reference>
<reference key="5">
    <citation type="journal article" date="2004" name="Genome Res.">
        <title>The status, quality, and expansion of the NIH full-length cDNA project: the Mammalian Gene Collection (MGC).</title>
        <authorList>
            <consortium name="The MGC Project Team"/>
        </authorList>
    </citation>
    <scope>NUCLEOTIDE SEQUENCE [LARGE SCALE MRNA] (ISOFORMS 1 AND 3)</scope>
    <scope>VARIANTS CYS-22 AND MET-239</scope>
    <source>
        <tissue>Brain</tissue>
        <tissue>Kidney</tissue>
    </source>
</reference>
<reference key="6">
    <citation type="journal article" date="2001" name="Mol. Biol. Evol.">
        <title>A mammalian gene evolved from the integrase domain of an LTR retrotransposon.</title>
        <authorList>
            <person name="Llorens C."/>
            <person name="Marin I."/>
        </authorList>
    </citation>
    <scope>IDENTIFICATION</scope>
    <scope>TISSUE SPECIFICITY</scope>
</reference>
<reference key="7">
    <citation type="journal article" date="2013" name="J. Proteome Res.">
        <title>Toward a comprehensive characterization of a human cancer cell phosphoproteome.</title>
        <authorList>
            <person name="Zhou H."/>
            <person name="Di Palma S."/>
            <person name="Preisinger C."/>
            <person name="Peng M."/>
            <person name="Polat A.N."/>
            <person name="Heck A.J."/>
            <person name="Mohammed S."/>
        </authorList>
    </citation>
    <scope>PHOSPHORYLATION [LARGE SCALE ANALYSIS] AT SER-502</scope>
    <scope>IDENTIFICATION BY MASS SPECTROMETRY [LARGE SCALE ANALYSIS]</scope>
    <source>
        <tissue>Erythroleukemia</tissue>
    </source>
</reference>
<gene>
    <name type="primary">GIN1</name>
    <name type="synonym">TGIN1</name>
    <name type="synonym">ZH2C2</name>
</gene>